<sequence>MSHNSFGHLFRVTTWGESHGPSLGCVVDGCPPGIRFTLAEVQHWMDKRKPGQSRFVTQRREDDIVKVLSGVMLDEDGETMTTTGTPISMLIENTDQRSKDYGEIARRFRPGHADFTYDLKYGIRDYRGGGRSSARETAARVAAGAIARKVVPSLNVRGALVQIGKHKINRDNWDWDQVDQNPFFCPDPEMVPVWEEYLDGIRKSGSSIGAVVEVVAEGVPAGIGAPIYAKLDQDIASSLMSINAVKGVEIGEGFASAELSGEENADQMRMGNDGKPIFLSNHAGGILGGIATGEPVIARFAIKPTSSILTERLSIDTDGNNVDVRTKGRHDPCVGIRAVPIGEAMIACTVADHYLRDRGQTGRLK</sequence>
<dbReference type="EC" id="4.2.3.5" evidence="1"/>
<dbReference type="EMBL" id="AE007869">
    <property type="protein sequence ID" value="AAK86563.2"/>
    <property type="molecule type" value="Genomic_DNA"/>
</dbReference>
<dbReference type="RefSeq" id="NP_353778.2">
    <property type="nucleotide sequence ID" value="NC_003062.2"/>
</dbReference>
<dbReference type="RefSeq" id="WP_010971124.1">
    <property type="nucleotide sequence ID" value="NC_003062.2"/>
</dbReference>
<dbReference type="SMR" id="Q7D0R6"/>
<dbReference type="STRING" id="176299.Atu0754"/>
<dbReference type="EnsemblBacteria" id="AAK86563">
    <property type="protein sequence ID" value="AAK86563"/>
    <property type="gene ID" value="Atu0754"/>
</dbReference>
<dbReference type="GeneID" id="1132792"/>
<dbReference type="KEGG" id="atu:Atu0754"/>
<dbReference type="PATRIC" id="fig|176299.10.peg.751"/>
<dbReference type="eggNOG" id="COG0082">
    <property type="taxonomic scope" value="Bacteria"/>
</dbReference>
<dbReference type="HOGENOM" id="CLU_034547_0_0_5"/>
<dbReference type="OrthoDB" id="9771806at2"/>
<dbReference type="PhylomeDB" id="Q7D0R6"/>
<dbReference type="BioCyc" id="AGRO:ATU0754-MONOMER"/>
<dbReference type="UniPathway" id="UPA00053">
    <property type="reaction ID" value="UER00090"/>
</dbReference>
<dbReference type="Proteomes" id="UP000000813">
    <property type="component" value="Chromosome circular"/>
</dbReference>
<dbReference type="GO" id="GO:0005829">
    <property type="term" value="C:cytosol"/>
    <property type="evidence" value="ECO:0007669"/>
    <property type="project" value="TreeGrafter"/>
</dbReference>
<dbReference type="GO" id="GO:0004107">
    <property type="term" value="F:chorismate synthase activity"/>
    <property type="evidence" value="ECO:0007669"/>
    <property type="project" value="UniProtKB-UniRule"/>
</dbReference>
<dbReference type="GO" id="GO:0010181">
    <property type="term" value="F:FMN binding"/>
    <property type="evidence" value="ECO:0007669"/>
    <property type="project" value="TreeGrafter"/>
</dbReference>
<dbReference type="GO" id="GO:0008652">
    <property type="term" value="P:amino acid biosynthetic process"/>
    <property type="evidence" value="ECO:0007669"/>
    <property type="project" value="UniProtKB-KW"/>
</dbReference>
<dbReference type="GO" id="GO:0009073">
    <property type="term" value="P:aromatic amino acid family biosynthetic process"/>
    <property type="evidence" value="ECO:0007669"/>
    <property type="project" value="UniProtKB-KW"/>
</dbReference>
<dbReference type="GO" id="GO:0009423">
    <property type="term" value="P:chorismate biosynthetic process"/>
    <property type="evidence" value="ECO:0007669"/>
    <property type="project" value="UniProtKB-UniRule"/>
</dbReference>
<dbReference type="CDD" id="cd07304">
    <property type="entry name" value="Chorismate_synthase"/>
    <property type="match status" value="1"/>
</dbReference>
<dbReference type="Gene3D" id="3.60.150.10">
    <property type="entry name" value="Chorismate synthase AroC"/>
    <property type="match status" value="1"/>
</dbReference>
<dbReference type="HAMAP" id="MF_00300">
    <property type="entry name" value="Chorismate_synth"/>
    <property type="match status" value="1"/>
</dbReference>
<dbReference type="InterPro" id="IPR000453">
    <property type="entry name" value="Chorismate_synth"/>
</dbReference>
<dbReference type="InterPro" id="IPR035904">
    <property type="entry name" value="Chorismate_synth_AroC_sf"/>
</dbReference>
<dbReference type="InterPro" id="IPR020541">
    <property type="entry name" value="Chorismate_synthase_CS"/>
</dbReference>
<dbReference type="NCBIfam" id="TIGR00033">
    <property type="entry name" value="aroC"/>
    <property type="match status" value="1"/>
</dbReference>
<dbReference type="NCBIfam" id="NF003793">
    <property type="entry name" value="PRK05382.1"/>
    <property type="match status" value="1"/>
</dbReference>
<dbReference type="PANTHER" id="PTHR21085">
    <property type="entry name" value="CHORISMATE SYNTHASE"/>
    <property type="match status" value="1"/>
</dbReference>
<dbReference type="PANTHER" id="PTHR21085:SF0">
    <property type="entry name" value="CHORISMATE SYNTHASE"/>
    <property type="match status" value="1"/>
</dbReference>
<dbReference type="Pfam" id="PF01264">
    <property type="entry name" value="Chorismate_synt"/>
    <property type="match status" value="1"/>
</dbReference>
<dbReference type="PIRSF" id="PIRSF001456">
    <property type="entry name" value="Chorismate_synth"/>
    <property type="match status" value="1"/>
</dbReference>
<dbReference type="SUPFAM" id="SSF103263">
    <property type="entry name" value="Chorismate synthase, AroC"/>
    <property type="match status" value="1"/>
</dbReference>
<dbReference type="PROSITE" id="PS00787">
    <property type="entry name" value="CHORISMATE_SYNTHASE_1"/>
    <property type="match status" value="1"/>
</dbReference>
<dbReference type="PROSITE" id="PS00788">
    <property type="entry name" value="CHORISMATE_SYNTHASE_2"/>
    <property type="match status" value="1"/>
</dbReference>
<dbReference type="PROSITE" id="PS00789">
    <property type="entry name" value="CHORISMATE_SYNTHASE_3"/>
    <property type="match status" value="1"/>
</dbReference>
<reference key="1">
    <citation type="journal article" date="2001" name="Science">
        <title>The genome of the natural genetic engineer Agrobacterium tumefaciens C58.</title>
        <authorList>
            <person name="Wood D.W."/>
            <person name="Setubal J.C."/>
            <person name="Kaul R."/>
            <person name="Monks D.E."/>
            <person name="Kitajima J.P."/>
            <person name="Okura V.K."/>
            <person name="Zhou Y."/>
            <person name="Chen L."/>
            <person name="Wood G.E."/>
            <person name="Almeida N.F. Jr."/>
            <person name="Woo L."/>
            <person name="Chen Y."/>
            <person name="Paulsen I.T."/>
            <person name="Eisen J.A."/>
            <person name="Karp P.D."/>
            <person name="Bovee D. Sr."/>
            <person name="Chapman P."/>
            <person name="Clendenning J."/>
            <person name="Deatherage G."/>
            <person name="Gillet W."/>
            <person name="Grant C."/>
            <person name="Kutyavin T."/>
            <person name="Levy R."/>
            <person name="Li M.-J."/>
            <person name="McClelland E."/>
            <person name="Palmieri A."/>
            <person name="Raymond C."/>
            <person name="Rouse G."/>
            <person name="Saenphimmachak C."/>
            <person name="Wu Z."/>
            <person name="Romero P."/>
            <person name="Gordon D."/>
            <person name="Zhang S."/>
            <person name="Yoo H."/>
            <person name="Tao Y."/>
            <person name="Biddle P."/>
            <person name="Jung M."/>
            <person name="Krespan W."/>
            <person name="Perry M."/>
            <person name="Gordon-Kamm B."/>
            <person name="Liao L."/>
            <person name="Kim S."/>
            <person name="Hendrick C."/>
            <person name="Zhao Z.-Y."/>
            <person name="Dolan M."/>
            <person name="Chumley F."/>
            <person name="Tingey S.V."/>
            <person name="Tomb J.-F."/>
            <person name="Gordon M.P."/>
            <person name="Olson M.V."/>
            <person name="Nester E.W."/>
        </authorList>
    </citation>
    <scope>NUCLEOTIDE SEQUENCE [LARGE SCALE GENOMIC DNA]</scope>
    <source>
        <strain>C58 / ATCC 33970</strain>
    </source>
</reference>
<reference key="2">
    <citation type="journal article" date="2001" name="Science">
        <title>Genome sequence of the plant pathogen and biotechnology agent Agrobacterium tumefaciens C58.</title>
        <authorList>
            <person name="Goodner B."/>
            <person name="Hinkle G."/>
            <person name="Gattung S."/>
            <person name="Miller N."/>
            <person name="Blanchard M."/>
            <person name="Qurollo B."/>
            <person name="Goldman B.S."/>
            <person name="Cao Y."/>
            <person name="Askenazi M."/>
            <person name="Halling C."/>
            <person name="Mullin L."/>
            <person name="Houmiel K."/>
            <person name="Gordon J."/>
            <person name="Vaudin M."/>
            <person name="Iartchouk O."/>
            <person name="Epp A."/>
            <person name="Liu F."/>
            <person name="Wollam C."/>
            <person name="Allinger M."/>
            <person name="Doughty D."/>
            <person name="Scott C."/>
            <person name="Lappas C."/>
            <person name="Markelz B."/>
            <person name="Flanagan C."/>
            <person name="Crowell C."/>
            <person name="Gurson J."/>
            <person name="Lomo C."/>
            <person name="Sear C."/>
            <person name="Strub G."/>
            <person name="Cielo C."/>
            <person name="Slater S."/>
        </authorList>
    </citation>
    <scope>NUCLEOTIDE SEQUENCE [LARGE SCALE GENOMIC DNA]</scope>
    <source>
        <strain>C58 / ATCC 33970</strain>
    </source>
</reference>
<name>AROC_AGRFC</name>
<organism>
    <name type="scientific">Agrobacterium fabrum (strain C58 / ATCC 33970)</name>
    <name type="common">Agrobacterium tumefaciens (strain C58)</name>
    <dbReference type="NCBI Taxonomy" id="176299"/>
    <lineage>
        <taxon>Bacteria</taxon>
        <taxon>Pseudomonadati</taxon>
        <taxon>Pseudomonadota</taxon>
        <taxon>Alphaproteobacteria</taxon>
        <taxon>Hyphomicrobiales</taxon>
        <taxon>Rhizobiaceae</taxon>
        <taxon>Rhizobium/Agrobacterium group</taxon>
        <taxon>Agrobacterium</taxon>
        <taxon>Agrobacterium tumefaciens complex</taxon>
    </lineage>
</organism>
<comment type="function">
    <text evidence="1">Catalyzes the anti-1,4-elimination of the C-3 phosphate and the C-6 proR hydrogen from 5-enolpyruvylshikimate-3-phosphate (EPSP) to yield chorismate, which is the branch point compound that serves as the starting substrate for the three terminal pathways of aromatic amino acid biosynthesis. This reaction introduces a second double bond into the aromatic ring system.</text>
</comment>
<comment type="catalytic activity">
    <reaction evidence="1">
        <text>5-O-(1-carboxyvinyl)-3-phosphoshikimate = chorismate + phosphate</text>
        <dbReference type="Rhea" id="RHEA:21020"/>
        <dbReference type="ChEBI" id="CHEBI:29748"/>
        <dbReference type="ChEBI" id="CHEBI:43474"/>
        <dbReference type="ChEBI" id="CHEBI:57701"/>
        <dbReference type="EC" id="4.2.3.5"/>
    </reaction>
</comment>
<comment type="cofactor">
    <cofactor evidence="1">
        <name>FMNH2</name>
        <dbReference type="ChEBI" id="CHEBI:57618"/>
    </cofactor>
    <text evidence="1">Reduced FMN (FMNH(2)).</text>
</comment>
<comment type="pathway">
    <text evidence="1">Metabolic intermediate biosynthesis; chorismate biosynthesis; chorismate from D-erythrose 4-phosphate and phosphoenolpyruvate: step 7/7.</text>
</comment>
<comment type="subunit">
    <text evidence="1">Homotetramer.</text>
</comment>
<comment type="similarity">
    <text evidence="1">Belongs to the chorismate synthase family.</text>
</comment>
<protein>
    <recommendedName>
        <fullName evidence="1">Chorismate synthase</fullName>
        <shortName evidence="1">CS</shortName>
        <ecNumber evidence="1">4.2.3.5</ecNumber>
    </recommendedName>
    <alternativeName>
        <fullName evidence="1">5-enolpyruvylshikimate-3-phosphate phospholyase</fullName>
    </alternativeName>
</protein>
<feature type="chain" id="PRO_1000059307" description="Chorismate synthase">
    <location>
        <begin position="1"/>
        <end position="365"/>
    </location>
</feature>
<feature type="binding site" evidence="1">
    <location>
        <position position="48"/>
    </location>
    <ligand>
        <name>NADP(+)</name>
        <dbReference type="ChEBI" id="CHEBI:58349"/>
    </ligand>
</feature>
<feature type="binding site" evidence="1">
    <location>
        <position position="54"/>
    </location>
    <ligand>
        <name>NADP(+)</name>
        <dbReference type="ChEBI" id="CHEBI:58349"/>
    </ligand>
</feature>
<feature type="binding site" evidence="1">
    <location>
        <begin position="131"/>
        <end position="133"/>
    </location>
    <ligand>
        <name>FMN</name>
        <dbReference type="ChEBI" id="CHEBI:58210"/>
    </ligand>
</feature>
<feature type="binding site" evidence="1">
    <location>
        <begin position="243"/>
        <end position="244"/>
    </location>
    <ligand>
        <name>FMN</name>
        <dbReference type="ChEBI" id="CHEBI:58210"/>
    </ligand>
</feature>
<feature type="binding site" evidence="1">
    <location>
        <position position="288"/>
    </location>
    <ligand>
        <name>FMN</name>
        <dbReference type="ChEBI" id="CHEBI:58210"/>
    </ligand>
</feature>
<feature type="binding site" evidence="1">
    <location>
        <begin position="303"/>
        <end position="307"/>
    </location>
    <ligand>
        <name>FMN</name>
        <dbReference type="ChEBI" id="CHEBI:58210"/>
    </ligand>
</feature>
<feature type="binding site" evidence="1">
    <location>
        <position position="329"/>
    </location>
    <ligand>
        <name>FMN</name>
        <dbReference type="ChEBI" id="CHEBI:58210"/>
    </ligand>
</feature>
<gene>
    <name evidence="1" type="primary">aroC</name>
    <name type="ordered locus">Atu0754</name>
    <name type="ORF">AGR_C_1368</name>
</gene>
<evidence type="ECO:0000255" key="1">
    <source>
        <dbReference type="HAMAP-Rule" id="MF_00300"/>
    </source>
</evidence>
<accession>Q7D0R6</accession>
<proteinExistence type="inferred from homology"/>
<keyword id="KW-0028">Amino-acid biosynthesis</keyword>
<keyword id="KW-0057">Aromatic amino acid biosynthesis</keyword>
<keyword id="KW-0274">FAD</keyword>
<keyword id="KW-0285">Flavoprotein</keyword>
<keyword id="KW-0288">FMN</keyword>
<keyword id="KW-0456">Lyase</keyword>
<keyword id="KW-0521">NADP</keyword>
<keyword id="KW-1185">Reference proteome</keyword>